<dbReference type="EC" id="3.6.1.27" evidence="1"/>
<dbReference type="EMBL" id="CR555306">
    <property type="protein sequence ID" value="CAI07057.1"/>
    <property type="molecule type" value="Genomic_DNA"/>
</dbReference>
<dbReference type="RefSeq" id="WP_011236782.1">
    <property type="nucleotide sequence ID" value="NC_006513.1"/>
</dbReference>
<dbReference type="SMR" id="Q5P6K4"/>
<dbReference type="STRING" id="76114.ebA1726"/>
<dbReference type="KEGG" id="eba:ebA1726"/>
<dbReference type="eggNOG" id="COG1968">
    <property type="taxonomic scope" value="Bacteria"/>
</dbReference>
<dbReference type="HOGENOM" id="CLU_060296_2_0_4"/>
<dbReference type="OrthoDB" id="9808289at2"/>
<dbReference type="Proteomes" id="UP000006552">
    <property type="component" value="Chromosome"/>
</dbReference>
<dbReference type="GO" id="GO:0005886">
    <property type="term" value="C:plasma membrane"/>
    <property type="evidence" value="ECO:0007669"/>
    <property type="project" value="UniProtKB-SubCell"/>
</dbReference>
<dbReference type="GO" id="GO:0050380">
    <property type="term" value="F:undecaprenyl-diphosphatase activity"/>
    <property type="evidence" value="ECO:0007669"/>
    <property type="project" value="UniProtKB-UniRule"/>
</dbReference>
<dbReference type="GO" id="GO:0071555">
    <property type="term" value="P:cell wall organization"/>
    <property type="evidence" value="ECO:0007669"/>
    <property type="project" value="UniProtKB-KW"/>
</dbReference>
<dbReference type="GO" id="GO:0009252">
    <property type="term" value="P:peptidoglycan biosynthetic process"/>
    <property type="evidence" value="ECO:0007669"/>
    <property type="project" value="UniProtKB-KW"/>
</dbReference>
<dbReference type="GO" id="GO:0008360">
    <property type="term" value="P:regulation of cell shape"/>
    <property type="evidence" value="ECO:0007669"/>
    <property type="project" value="UniProtKB-KW"/>
</dbReference>
<dbReference type="GO" id="GO:0046677">
    <property type="term" value="P:response to antibiotic"/>
    <property type="evidence" value="ECO:0007669"/>
    <property type="project" value="UniProtKB-UniRule"/>
</dbReference>
<dbReference type="HAMAP" id="MF_01006">
    <property type="entry name" value="Undec_diphosphatase"/>
    <property type="match status" value="1"/>
</dbReference>
<dbReference type="InterPro" id="IPR003824">
    <property type="entry name" value="UppP"/>
</dbReference>
<dbReference type="NCBIfam" id="NF001389">
    <property type="entry name" value="PRK00281.1-2"/>
    <property type="match status" value="1"/>
</dbReference>
<dbReference type="NCBIfam" id="NF001390">
    <property type="entry name" value="PRK00281.1-4"/>
    <property type="match status" value="1"/>
</dbReference>
<dbReference type="NCBIfam" id="TIGR00753">
    <property type="entry name" value="undec_PP_bacA"/>
    <property type="match status" value="1"/>
</dbReference>
<dbReference type="PANTHER" id="PTHR30622">
    <property type="entry name" value="UNDECAPRENYL-DIPHOSPHATASE"/>
    <property type="match status" value="1"/>
</dbReference>
<dbReference type="PANTHER" id="PTHR30622:SF3">
    <property type="entry name" value="UNDECAPRENYL-DIPHOSPHATASE"/>
    <property type="match status" value="1"/>
</dbReference>
<dbReference type="Pfam" id="PF02673">
    <property type="entry name" value="BacA"/>
    <property type="match status" value="1"/>
</dbReference>
<organism>
    <name type="scientific">Aromatoleum aromaticum (strain DSM 19018 / LMG 30748 / EbN1)</name>
    <name type="common">Azoarcus sp. (strain EbN1)</name>
    <dbReference type="NCBI Taxonomy" id="76114"/>
    <lineage>
        <taxon>Bacteria</taxon>
        <taxon>Pseudomonadati</taxon>
        <taxon>Pseudomonadota</taxon>
        <taxon>Betaproteobacteria</taxon>
        <taxon>Rhodocyclales</taxon>
        <taxon>Rhodocyclaceae</taxon>
        <taxon>Aromatoleum</taxon>
    </lineage>
</organism>
<protein>
    <recommendedName>
        <fullName evidence="1">Undecaprenyl-diphosphatase</fullName>
        <ecNumber evidence="1">3.6.1.27</ecNumber>
    </recommendedName>
    <alternativeName>
        <fullName evidence="1">Bacitracin resistance protein</fullName>
    </alternativeName>
    <alternativeName>
        <fullName evidence="1">Undecaprenyl pyrophosphate phosphatase</fullName>
    </alternativeName>
</protein>
<evidence type="ECO:0000255" key="1">
    <source>
        <dbReference type="HAMAP-Rule" id="MF_01006"/>
    </source>
</evidence>
<gene>
    <name evidence="1" type="primary">uppP</name>
    <name type="synonym">upk</name>
    <name type="ordered locus">AZOSEA09320</name>
    <name type="ORF">ebA1726</name>
</gene>
<name>UPPP_AROAE</name>
<feature type="chain" id="PRO_0000151084" description="Undecaprenyl-diphosphatase">
    <location>
        <begin position="1"/>
        <end position="274"/>
    </location>
</feature>
<feature type="transmembrane region" description="Helical" evidence="1">
    <location>
        <begin position="4"/>
        <end position="24"/>
    </location>
</feature>
<feature type="transmembrane region" description="Helical" evidence="1">
    <location>
        <begin position="41"/>
        <end position="61"/>
    </location>
</feature>
<feature type="transmembrane region" description="Helical" evidence="1">
    <location>
        <begin position="83"/>
        <end position="103"/>
    </location>
</feature>
<feature type="transmembrane region" description="Helical" evidence="1">
    <location>
        <begin position="108"/>
        <end position="128"/>
    </location>
</feature>
<feature type="transmembrane region" description="Helical" evidence="1">
    <location>
        <begin position="184"/>
        <end position="204"/>
    </location>
</feature>
<feature type="transmembrane region" description="Helical" evidence="1">
    <location>
        <begin position="218"/>
        <end position="238"/>
    </location>
</feature>
<feature type="transmembrane region" description="Helical" evidence="1">
    <location>
        <begin position="246"/>
        <end position="266"/>
    </location>
</feature>
<accession>Q5P6K4</accession>
<keyword id="KW-0046">Antibiotic resistance</keyword>
<keyword id="KW-0997">Cell inner membrane</keyword>
<keyword id="KW-1003">Cell membrane</keyword>
<keyword id="KW-0133">Cell shape</keyword>
<keyword id="KW-0961">Cell wall biogenesis/degradation</keyword>
<keyword id="KW-0378">Hydrolase</keyword>
<keyword id="KW-0472">Membrane</keyword>
<keyword id="KW-0573">Peptidoglycan synthesis</keyword>
<keyword id="KW-1185">Reference proteome</keyword>
<keyword id="KW-0812">Transmembrane</keyword>
<keyword id="KW-1133">Transmembrane helix</keyword>
<comment type="function">
    <text evidence="1">Catalyzes the dephosphorylation of undecaprenyl diphosphate (UPP). Confers resistance to bacitracin.</text>
</comment>
<comment type="catalytic activity">
    <reaction evidence="1">
        <text>di-trans,octa-cis-undecaprenyl diphosphate + H2O = di-trans,octa-cis-undecaprenyl phosphate + phosphate + H(+)</text>
        <dbReference type="Rhea" id="RHEA:28094"/>
        <dbReference type="ChEBI" id="CHEBI:15377"/>
        <dbReference type="ChEBI" id="CHEBI:15378"/>
        <dbReference type="ChEBI" id="CHEBI:43474"/>
        <dbReference type="ChEBI" id="CHEBI:58405"/>
        <dbReference type="ChEBI" id="CHEBI:60392"/>
        <dbReference type="EC" id="3.6.1.27"/>
    </reaction>
</comment>
<comment type="subcellular location">
    <subcellularLocation>
        <location evidence="1">Cell inner membrane</location>
        <topology evidence="1">Multi-pass membrane protein</topology>
    </subcellularLocation>
</comment>
<comment type="miscellaneous">
    <text>Bacitracin is thought to be involved in the inhibition of peptidoglycan synthesis by sequestering undecaprenyl diphosphate, thereby reducing the pool of lipid carrier available.</text>
</comment>
<comment type="similarity">
    <text evidence="1">Belongs to the UppP family.</text>
</comment>
<proteinExistence type="inferred from homology"/>
<sequence>MDLPLFVIALILGIVEGLTEFLPISSTGHLIIIGDLLGYNDATSKVFKIVIQFAAILAVCWDYRERLARVAAGVGSEPAAQRFVGLLFIGFLPAAVLGLMFHSTIKSLLFNPLTVATALVVGGVLILWLERRAYHPRINAVDEMRWADALKVGFAQAAAMIPGTSRSGATILGGLVFGLSRKAAAEFSFFLSIPTMFAATVYDLYKNRDLLHMGDLPVFAIGFVASFFAAMFAVKAFIRFISNHTFIAFAWYRIVFGLVVLATWQLELVEWSEP</sequence>
<reference key="1">
    <citation type="journal article" date="2005" name="Arch. Microbiol.">
        <title>The genome sequence of an anaerobic aromatic-degrading denitrifying bacterium, strain EbN1.</title>
        <authorList>
            <person name="Rabus R."/>
            <person name="Kube M."/>
            <person name="Heider J."/>
            <person name="Beck A."/>
            <person name="Heitmann K."/>
            <person name="Widdel F."/>
            <person name="Reinhardt R."/>
        </authorList>
    </citation>
    <scope>NUCLEOTIDE SEQUENCE [LARGE SCALE GENOMIC DNA]</scope>
    <source>
        <strain>DSM 19018 / LMG 30748 / EbN1</strain>
    </source>
</reference>